<comment type="subcellular location">
    <subcellularLocation>
        <location evidence="2">Membrane</location>
        <topology evidence="2">Single-pass membrane protein</topology>
    </subcellularLocation>
</comment>
<comment type="sequence caution" evidence="2">
    <conflict type="frameshift">
        <sequence resource="EMBL-CDS" id="BAC37368"/>
    </conflict>
</comment>
<sequence length="225" mass="24787">MAQSDFLYPQNPRRRQEVNRLHQQLLDCLSDSFQVTNKLTGVLNTHLGCRLAFIEMKSDGTIKENCDIIIQAMTKIQKELQKIDEALKDQLEPTLYRKLQDIKERETEKIAIVQKVISVILGEATSAASAVAVKLVGSSVTTGIISKLVSVLAHIGTSLLGSIGVAVLSLGIDMIIQAILGAVERTQLQAAIKSYEKHLEEFKAASAKYHHAITEVATAVKRQLR</sequence>
<feature type="chain" id="PRO_0000336989" description="Single-pass membrane and coiled-coil domain-containing protein 3">
    <location>
        <begin position="1"/>
        <end position="225"/>
    </location>
</feature>
<feature type="transmembrane region" description="Helical" evidence="1">
    <location>
        <begin position="155"/>
        <end position="175"/>
    </location>
</feature>
<feature type="coiled-coil region" evidence="1">
    <location>
        <begin position="69"/>
        <end position="92"/>
    </location>
</feature>
<feature type="coiled-coil region" evidence="1">
    <location>
        <begin position="182"/>
        <end position="209"/>
    </location>
</feature>
<feature type="sequence conflict" description="In Ref. 1; BAC32422." evidence="2" ref="1">
    <original>F</original>
    <variation>L</variation>
    <location>
        <position position="33"/>
    </location>
</feature>
<reference key="1">
    <citation type="journal article" date="2005" name="Science">
        <title>The transcriptional landscape of the mammalian genome.</title>
        <authorList>
            <person name="Carninci P."/>
            <person name="Kasukawa T."/>
            <person name="Katayama S."/>
            <person name="Gough J."/>
            <person name="Frith M.C."/>
            <person name="Maeda N."/>
            <person name="Oyama R."/>
            <person name="Ravasi T."/>
            <person name="Lenhard B."/>
            <person name="Wells C."/>
            <person name="Kodzius R."/>
            <person name="Shimokawa K."/>
            <person name="Bajic V.B."/>
            <person name="Brenner S.E."/>
            <person name="Batalov S."/>
            <person name="Forrest A.R."/>
            <person name="Zavolan M."/>
            <person name="Davis M.J."/>
            <person name="Wilming L.G."/>
            <person name="Aidinis V."/>
            <person name="Allen J.E."/>
            <person name="Ambesi-Impiombato A."/>
            <person name="Apweiler R."/>
            <person name="Aturaliya R.N."/>
            <person name="Bailey T.L."/>
            <person name="Bansal M."/>
            <person name="Baxter L."/>
            <person name="Beisel K.W."/>
            <person name="Bersano T."/>
            <person name="Bono H."/>
            <person name="Chalk A.M."/>
            <person name="Chiu K.P."/>
            <person name="Choudhary V."/>
            <person name="Christoffels A."/>
            <person name="Clutterbuck D.R."/>
            <person name="Crowe M.L."/>
            <person name="Dalla E."/>
            <person name="Dalrymple B.P."/>
            <person name="de Bono B."/>
            <person name="Della Gatta G."/>
            <person name="di Bernardo D."/>
            <person name="Down T."/>
            <person name="Engstrom P."/>
            <person name="Fagiolini M."/>
            <person name="Faulkner G."/>
            <person name="Fletcher C.F."/>
            <person name="Fukushima T."/>
            <person name="Furuno M."/>
            <person name="Futaki S."/>
            <person name="Gariboldi M."/>
            <person name="Georgii-Hemming P."/>
            <person name="Gingeras T.R."/>
            <person name="Gojobori T."/>
            <person name="Green R.E."/>
            <person name="Gustincich S."/>
            <person name="Harbers M."/>
            <person name="Hayashi Y."/>
            <person name="Hensch T.K."/>
            <person name="Hirokawa N."/>
            <person name="Hill D."/>
            <person name="Huminiecki L."/>
            <person name="Iacono M."/>
            <person name="Ikeo K."/>
            <person name="Iwama A."/>
            <person name="Ishikawa T."/>
            <person name="Jakt M."/>
            <person name="Kanapin A."/>
            <person name="Katoh M."/>
            <person name="Kawasawa Y."/>
            <person name="Kelso J."/>
            <person name="Kitamura H."/>
            <person name="Kitano H."/>
            <person name="Kollias G."/>
            <person name="Krishnan S.P."/>
            <person name="Kruger A."/>
            <person name="Kummerfeld S.K."/>
            <person name="Kurochkin I.V."/>
            <person name="Lareau L.F."/>
            <person name="Lazarevic D."/>
            <person name="Lipovich L."/>
            <person name="Liu J."/>
            <person name="Liuni S."/>
            <person name="McWilliam S."/>
            <person name="Madan Babu M."/>
            <person name="Madera M."/>
            <person name="Marchionni L."/>
            <person name="Matsuda H."/>
            <person name="Matsuzawa S."/>
            <person name="Miki H."/>
            <person name="Mignone F."/>
            <person name="Miyake S."/>
            <person name="Morris K."/>
            <person name="Mottagui-Tabar S."/>
            <person name="Mulder N."/>
            <person name="Nakano N."/>
            <person name="Nakauchi H."/>
            <person name="Ng P."/>
            <person name="Nilsson R."/>
            <person name="Nishiguchi S."/>
            <person name="Nishikawa S."/>
            <person name="Nori F."/>
            <person name="Ohara O."/>
            <person name="Okazaki Y."/>
            <person name="Orlando V."/>
            <person name="Pang K.C."/>
            <person name="Pavan W.J."/>
            <person name="Pavesi G."/>
            <person name="Pesole G."/>
            <person name="Petrovsky N."/>
            <person name="Piazza S."/>
            <person name="Reed J."/>
            <person name="Reid J.F."/>
            <person name="Ring B.Z."/>
            <person name="Ringwald M."/>
            <person name="Rost B."/>
            <person name="Ruan Y."/>
            <person name="Salzberg S.L."/>
            <person name="Sandelin A."/>
            <person name="Schneider C."/>
            <person name="Schoenbach C."/>
            <person name="Sekiguchi K."/>
            <person name="Semple C.A."/>
            <person name="Seno S."/>
            <person name="Sessa L."/>
            <person name="Sheng Y."/>
            <person name="Shibata Y."/>
            <person name="Shimada H."/>
            <person name="Shimada K."/>
            <person name="Silva D."/>
            <person name="Sinclair B."/>
            <person name="Sperling S."/>
            <person name="Stupka E."/>
            <person name="Sugiura K."/>
            <person name="Sultana R."/>
            <person name="Takenaka Y."/>
            <person name="Taki K."/>
            <person name="Tammoja K."/>
            <person name="Tan S.L."/>
            <person name="Tang S."/>
            <person name="Taylor M.S."/>
            <person name="Tegner J."/>
            <person name="Teichmann S.A."/>
            <person name="Ueda H.R."/>
            <person name="van Nimwegen E."/>
            <person name="Verardo R."/>
            <person name="Wei C.L."/>
            <person name="Yagi K."/>
            <person name="Yamanishi H."/>
            <person name="Zabarovsky E."/>
            <person name="Zhu S."/>
            <person name="Zimmer A."/>
            <person name="Hide W."/>
            <person name="Bult C."/>
            <person name="Grimmond S.M."/>
            <person name="Teasdale R.D."/>
            <person name="Liu E.T."/>
            <person name="Brusic V."/>
            <person name="Quackenbush J."/>
            <person name="Wahlestedt C."/>
            <person name="Mattick J.S."/>
            <person name="Hume D.A."/>
            <person name="Kai C."/>
            <person name="Sasaki D."/>
            <person name="Tomaru Y."/>
            <person name="Fukuda S."/>
            <person name="Kanamori-Katayama M."/>
            <person name="Suzuki M."/>
            <person name="Aoki J."/>
            <person name="Arakawa T."/>
            <person name="Iida J."/>
            <person name="Imamura K."/>
            <person name="Itoh M."/>
            <person name="Kato T."/>
            <person name="Kawaji H."/>
            <person name="Kawagashira N."/>
            <person name="Kawashima T."/>
            <person name="Kojima M."/>
            <person name="Kondo S."/>
            <person name="Konno H."/>
            <person name="Nakano K."/>
            <person name="Ninomiya N."/>
            <person name="Nishio T."/>
            <person name="Okada M."/>
            <person name="Plessy C."/>
            <person name="Shibata K."/>
            <person name="Shiraki T."/>
            <person name="Suzuki S."/>
            <person name="Tagami M."/>
            <person name="Waki K."/>
            <person name="Watahiki A."/>
            <person name="Okamura-Oho Y."/>
            <person name="Suzuki H."/>
            <person name="Kawai J."/>
            <person name="Hayashizaki Y."/>
        </authorList>
    </citation>
    <scope>NUCLEOTIDE SEQUENCE [LARGE SCALE MRNA]</scope>
    <source>
        <strain>C57BL/6J</strain>
        <tissue>Corpora quadrigemina</tissue>
        <tissue>Corpus striatum</tissue>
        <tissue>Eye</tissue>
    </source>
</reference>
<accession>Q8BQM7</accession>
<accession>Q8BNZ4</accession>
<accession>Q8BR60</accession>
<organism>
    <name type="scientific">Mus musculus</name>
    <name type="common">Mouse</name>
    <dbReference type="NCBI Taxonomy" id="10090"/>
    <lineage>
        <taxon>Eukaryota</taxon>
        <taxon>Metazoa</taxon>
        <taxon>Chordata</taxon>
        <taxon>Craniata</taxon>
        <taxon>Vertebrata</taxon>
        <taxon>Euteleostomi</taxon>
        <taxon>Mammalia</taxon>
        <taxon>Eutheria</taxon>
        <taxon>Euarchontoglires</taxon>
        <taxon>Glires</taxon>
        <taxon>Rodentia</taxon>
        <taxon>Myomorpha</taxon>
        <taxon>Muroidea</taxon>
        <taxon>Muridae</taxon>
        <taxon>Murinae</taxon>
        <taxon>Mus</taxon>
        <taxon>Mus</taxon>
    </lineage>
</organism>
<dbReference type="EMBL" id="AK078719">
    <property type="protein sequence ID" value="BAC37368.1"/>
    <property type="status" value="ALT_FRAME"/>
    <property type="molecule type" value="mRNA"/>
</dbReference>
<dbReference type="EMBL" id="AK045581">
    <property type="protein sequence ID" value="BAC32422.1"/>
    <property type="molecule type" value="mRNA"/>
</dbReference>
<dbReference type="EMBL" id="AK047766">
    <property type="protein sequence ID" value="BAC33151.1"/>
    <property type="molecule type" value="mRNA"/>
</dbReference>
<dbReference type="CCDS" id="CCDS20656.1"/>
<dbReference type="RefSeq" id="NP_001034647.2">
    <property type="nucleotide sequence ID" value="NM_001039558.2"/>
</dbReference>
<dbReference type="FunCoup" id="Q8BQM7">
    <property type="interactions" value="10"/>
</dbReference>
<dbReference type="STRING" id="10090.ENSMUSP00000066235"/>
<dbReference type="PhosphoSitePlus" id="Q8BQM7"/>
<dbReference type="PaxDb" id="10090-ENSMUSP00000066235"/>
<dbReference type="ProteomicsDB" id="257266"/>
<dbReference type="Antibodypedia" id="65695">
    <property type="antibodies" value="47 antibodies from 14 providers"/>
</dbReference>
<dbReference type="Ensembl" id="ENSMUST00000068293.4">
    <property type="protein sequence ID" value="ENSMUSP00000066235.4"/>
    <property type="gene ID" value="ENSMUSG00000043298.9"/>
</dbReference>
<dbReference type="Ensembl" id="ENSMUST00000111894.2">
    <property type="protein sequence ID" value="ENSMUSP00000107525.2"/>
    <property type="gene ID" value="ENSMUSG00000043298.9"/>
</dbReference>
<dbReference type="Ensembl" id="ENSMUST00000203468.2">
    <property type="protein sequence ID" value="ENSMUSP00000144838.2"/>
    <property type="gene ID" value="ENSMUSG00000043298.9"/>
</dbReference>
<dbReference type="GeneID" id="654818"/>
<dbReference type="KEGG" id="mmu:654818"/>
<dbReference type="UCSC" id="uc009emj.1">
    <property type="organism name" value="mouse"/>
</dbReference>
<dbReference type="AGR" id="MGI:2443451"/>
<dbReference type="CTD" id="440087"/>
<dbReference type="MGI" id="MGI:2443451">
    <property type="gene designation" value="Smco3"/>
</dbReference>
<dbReference type="VEuPathDB" id="HostDB:ENSMUSG00000043298"/>
<dbReference type="eggNOG" id="ENOG502RYUI">
    <property type="taxonomic scope" value="Eukaryota"/>
</dbReference>
<dbReference type="GeneTree" id="ENSGT00390000013440"/>
<dbReference type="HOGENOM" id="CLU_1229530_0_0_1"/>
<dbReference type="InParanoid" id="Q8BQM7"/>
<dbReference type="OMA" id="MSTNFHA"/>
<dbReference type="OrthoDB" id="6112619at2759"/>
<dbReference type="TreeFam" id="TF335698"/>
<dbReference type="BioGRID-ORCS" id="654818">
    <property type="hits" value="0 hits in 76 CRISPR screens"/>
</dbReference>
<dbReference type="PRO" id="PR:Q8BQM7"/>
<dbReference type="Proteomes" id="UP000000589">
    <property type="component" value="Chromosome 6"/>
</dbReference>
<dbReference type="RNAct" id="Q8BQM7">
    <property type="molecule type" value="protein"/>
</dbReference>
<dbReference type="Bgee" id="ENSMUSG00000043298">
    <property type="expression patterns" value="Expressed in sciatic nerve and 65 other cell types or tissues"/>
</dbReference>
<dbReference type="GO" id="GO:0016020">
    <property type="term" value="C:membrane"/>
    <property type="evidence" value="ECO:0007669"/>
    <property type="project" value="UniProtKB-SubCell"/>
</dbReference>
<dbReference type="InterPro" id="IPR027895">
    <property type="entry name" value="DUF4533"/>
</dbReference>
<dbReference type="InterPro" id="IPR040004">
    <property type="entry name" value="SMCO3"/>
</dbReference>
<dbReference type="PANTHER" id="PTHR35972">
    <property type="entry name" value="SINGLE-PASS MEMBRANE AND COILED-COIL DOMAIN-CONTAINING PROTEIN 3"/>
    <property type="match status" value="1"/>
</dbReference>
<dbReference type="PANTHER" id="PTHR35972:SF1">
    <property type="entry name" value="SINGLE-PASS MEMBRANE AND COILED-COIL DOMAIN-CONTAINING PROTEIN 3"/>
    <property type="match status" value="1"/>
</dbReference>
<dbReference type="Pfam" id="PF15047">
    <property type="entry name" value="DUF4533"/>
    <property type="match status" value="2"/>
</dbReference>
<proteinExistence type="evidence at transcript level"/>
<evidence type="ECO:0000255" key="1"/>
<evidence type="ECO:0000305" key="2"/>
<keyword id="KW-0175">Coiled coil</keyword>
<keyword id="KW-0472">Membrane</keyword>
<keyword id="KW-1185">Reference proteome</keyword>
<keyword id="KW-0812">Transmembrane</keyword>
<keyword id="KW-1133">Transmembrane helix</keyword>
<protein>
    <recommendedName>
        <fullName>Single-pass membrane and coiled-coil domain-containing protein 3</fullName>
    </recommendedName>
</protein>
<gene>
    <name type="primary">Smco3</name>
</gene>
<name>SMCO3_MOUSE</name>